<accession>Q5E7U6</accession>
<proteinExistence type="inferred from homology"/>
<evidence type="ECO:0000255" key="1">
    <source>
        <dbReference type="HAMAP-Rule" id="MF_00002"/>
    </source>
</evidence>
<dbReference type="EMBL" id="CP000020">
    <property type="protein sequence ID" value="AAW84900.1"/>
    <property type="molecule type" value="Genomic_DNA"/>
</dbReference>
<dbReference type="RefSeq" id="WP_011261195.1">
    <property type="nucleotide sequence ID" value="NZ_CAWLES010000001.1"/>
</dbReference>
<dbReference type="RefSeq" id="YP_203788.1">
    <property type="nucleotide sequence ID" value="NC_006840.2"/>
</dbReference>
<dbReference type="SMR" id="Q5E7U6"/>
<dbReference type="STRING" id="312309.VF_0405"/>
<dbReference type="EnsemblBacteria" id="AAW84900">
    <property type="protein sequence ID" value="AAW84900"/>
    <property type="gene ID" value="VF_0405"/>
</dbReference>
<dbReference type="GeneID" id="54163032"/>
<dbReference type="KEGG" id="vfi:VF_0405"/>
<dbReference type="PATRIC" id="fig|312309.11.peg.395"/>
<dbReference type="eggNOG" id="COG1781">
    <property type="taxonomic scope" value="Bacteria"/>
</dbReference>
<dbReference type="HOGENOM" id="CLU_128576_0_0_6"/>
<dbReference type="OrthoDB" id="5599321at2"/>
<dbReference type="Proteomes" id="UP000000537">
    <property type="component" value="Chromosome I"/>
</dbReference>
<dbReference type="GO" id="GO:0009347">
    <property type="term" value="C:aspartate carbamoyltransferase complex"/>
    <property type="evidence" value="ECO:0007669"/>
    <property type="project" value="InterPro"/>
</dbReference>
<dbReference type="GO" id="GO:0046872">
    <property type="term" value="F:metal ion binding"/>
    <property type="evidence" value="ECO:0007669"/>
    <property type="project" value="UniProtKB-KW"/>
</dbReference>
<dbReference type="GO" id="GO:0006207">
    <property type="term" value="P:'de novo' pyrimidine nucleobase biosynthetic process"/>
    <property type="evidence" value="ECO:0007669"/>
    <property type="project" value="InterPro"/>
</dbReference>
<dbReference type="GO" id="GO:0006221">
    <property type="term" value="P:pyrimidine nucleotide biosynthetic process"/>
    <property type="evidence" value="ECO:0007669"/>
    <property type="project" value="UniProtKB-UniRule"/>
</dbReference>
<dbReference type="Gene3D" id="2.30.30.20">
    <property type="entry name" value="Aspartate carbamoyltransferase regulatory subunit, C-terminal domain"/>
    <property type="match status" value="1"/>
</dbReference>
<dbReference type="Gene3D" id="3.30.70.140">
    <property type="entry name" value="Aspartate carbamoyltransferase regulatory subunit, N-terminal domain"/>
    <property type="match status" value="1"/>
</dbReference>
<dbReference type="HAMAP" id="MF_00002">
    <property type="entry name" value="Asp_carb_tr_reg"/>
    <property type="match status" value="1"/>
</dbReference>
<dbReference type="InterPro" id="IPR020545">
    <property type="entry name" value="Asp_carbamoyltransf_reg_N"/>
</dbReference>
<dbReference type="InterPro" id="IPR002801">
    <property type="entry name" value="Asp_carbamoylTrfase_reg"/>
</dbReference>
<dbReference type="InterPro" id="IPR020542">
    <property type="entry name" value="Asp_carbamoyltrfase_reg_C"/>
</dbReference>
<dbReference type="InterPro" id="IPR036792">
    <property type="entry name" value="Asp_carbatrfase_reg_C_sf"/>
</dbReference>
<dbReference type="InterPro" id="IPR036793">
    <property type="entry name" value="Asp_carbatrfase_reg_N_sf"/>
</dbReference>
<dbReference type="NCBIfam" id="TIGR00240">
    <property type="entry name" value="ATCase_reg"/>
    <property type="match status" value="1"/>
</dbReference>
<dbReference type="PANTHER" id="PTHR35805">
    <property type="entry name" value="ASPARTATE CARBAMOYLTRANSFERASE REGULATORY CHAIN"/>
    <property type="match status" value="1"/>
</dbReference>
<dbReference type="PANTHER" id="PTHR35805:SF1">
    <property type="entry name" value="ASPARTATE CARBAMOYLTRANSFERASE REGULATORY CHAIN"/>
    <property type="match status" value="1"/>
</dbReference>
<dbReference type="Pfam" id="PF01948">
    <property type="entry name" value="PyrI"/>
    <property type="match status" value="1"/>
</dbReference>
<dbReference type="Pfam" id="PF02748">
    <property type="entry name" value="PyrI_C"/>
    <property type="match status" value="1"/>
</dbReference>
<dbReference type="SUPFAM" id="SSF57825">
    <property type="entry name" value="Aspartate carbamoyltransferase, Regulatory-chain, C-terminal domain"/>
    <property type="match status" value="1"/>
</dbReference>
<dbReference type="SUPFAM" id="SSF54893">
    <property type="entry name" value="Aspartate carbamoyltransferase, Regulatory-chain, N-terminal domain"/>
    <property type="match status" value="1"/>
</dbReference>
<gene>
    <name evidence="1" type="primary">pyrI</name>
    <name type="ordered locus">VF_0405</name>
</gene>
<name>PYRI_ALIF1</name>
<feature type="chain" id="PRO_0000142318" description="Aspartate carbamoyltransferase regulatory chain">
    <location>
        <begin position="1"/>
        <end position="154"/>
    </location>
</feature>
<feature type="binding site" evidence="1">
    <location>
        <position position="109"/>
    </location>
    <ligand>
        <name>Zn(2+)</name>
        <dbReference type="ChEBI" id="CHEBI:29105"/>
    </ligand>
</feature>
<feature type="binding site" evidence="1">
    <location>
        <position position="114"/>
    </location>
    <ligand>
        <name>Zn(2+)</name>
        <dbReference type="ChEBI" id="CHEBI:29105"/>
    </ligand>
</feature>
<feature type="binding site" evidence="1">
    <location>
        <position position="138"/>
    </location>
    <ligand>
        <name>Zn(2+)</name>
        <dbReference type="ChEBI" id="CHEBI:29105"/>
    </ligand>
</feature>
<feature type="binding site" evidence="1">
    <location>
        <position position="141"/>
    </location>
    <ligand>
        <name>Zn(2+)</name>
        <dbReference type="ChEBI" id="CHEBI:29105"/>
    </ligand>
</feature>
<sequence length="154" mass="17090">MANKTQLRVEAINNGTVIDHIPANIGIKVLKLFQMDKSAERVTVGLNLPSSALGAKDLLKIENTFITPEQASKLALYAPHATVNQIENYEVVKKIPLVLPEQITGVFECPNSNCITHGEPVDSSFKVLTKKEDIHLKCKYCEKVYSREVVTDLN</sequence>
<organism>
    <name type="scientific">Aliivibrio fischeri (strain ATCC 700601 / ES114)</name>
    <name type="common">Vibrio fischeri</name>
    <dbReference type="NCBI Taxonomy" id="312309"/>
    <lineage>
        <taxon>Bacteria</taxon>
        <taxon>Pseudomonadati</taxon>
        <taxon>Pseudomonadota</taxon>
        <taxon>Gammaproteobacteria</taxon>
        <taxon>Vibrionales</taxon>
        <taxon>Vibrionaceae</taxon>
        <taxon>Aliivibrio</taxon>
    </lineage>
</organism>
<reference key="1">
    <citation type="journal article" date="2005" name="Proc. Natl. Acad. Sci. U.S.A.">
        <title>Complete genome sequence of Vibrio fischeri: a symbiotic bacterium with pathogenic congeners.</title>
        <authorList>
            <person name="Ruby E.G."/>
            <person name="Urbanowski M."/>
            <person name="Campbell J."/>
            <person name="Dunn A."/>
            <person name="Faini M."/>
            <person name="Gunsalus R."/>
            <person name="Lostroh P."/>
            <person name="Lupp C."/>
            <person name="McCann J."/>
            <person name="Millikan D."/>
            <person name="Schaefer A."/>
            <person name="Stabb E."/>
            <person name="Stevens A."/>
            <person name="Visick K."/>
            <person name="Whistler C."/>
            <person name="Greenberg E.P."/>
        </authorList>
    </citation>
    <scope>NUCLEOTIDE SEQUENCE [LARGE SCALE GENOMIC DNA]</scope>
    <source>
        <strain>ATCC 700601 / ES114</strain>
    </source>
</reference>
<protein>
    <recommendedName>
        <fullName evidence="1">Aspartate carbamoyltransferase regulatory chain</fullName>
    </recommendedName>
</protein>
<comment type="function">
    <text evidence="1">Involved in allosteric regulation of aspartate carbamoyltransferase.</text>
</comment>
<comment type="cofactor">
    <cofactor evidence="1">
        <name>Zn(2+)</name>
        <dbReference type="ChEBI" id="CHEBI:29105"/>
    </cofactor>
    <text evidence="1">Binds 1 zinc ion per subunit.</text>
</comment>
<comment type="subunit">
    <text evidence="1">Contains catalytic and regulatory chains.</text>
</comment>
<comment type="similarity">
    <text evidence="1">Belongs to the PyrI family.</text>
</comment>
<keyword id="KW-0479">Metal-binding</keyword>
<keyword id="KW-0665">Pyrimidine biosynthesis</keyword>
<keyword id="KW-1185">Reference proteome</keyword>
<keyword id="KW-0862">Zinc</keyword>